<gene>
    <name evidence="1" type="primary">uppP</name>
    <name type="ordered locus">BLD_0446</name>
</gene>
<dbReference type="EC" id="3.6.1.27" evidence="1"/>
<dbReference type="EMBL" id="CP000605">
    <property type="protein sequence ID" value="ACD97892.1"/>
    <property type="molecule type" value="Genomic_DNA"/>
</dbReference>
<dbReference type="RefSeq" id="WP_007052850.1">
    <property type="nucleotide sequence ID" value="NZ_AABM02000001.1"/>
</dbReference>
<dbReference type="SMR" id="B3DRX3"/>
<dbReference type="KEGG" id="blj:BLD_0446"/>
<dbReference type="HOGENOM" id="CLU_060296_1_0_11"/>
<dbReference type="Proteomes" id="UP000002419">
    <property type="component" value="Chromosome"/>
</dbReference>
<dbReference type="GO" id="GO:0005886">
    <property type="term" value="C:plasma membrane"/>
    <property type="evidence" value="ECO:0007669"/>
    <property type="project" value="UniProtKB-SubCell"/>
</dbReference>
<dbReference type="GO" id="GO:0050380">
    <property type="term" value="F:undecaprenyl-diphosphatase activity"/>
    <property type="evidence" value="ECO:0007669"/>
    <property type="project" value="UniProtKB-UniRule"/>
</dbReference>
<dbReference type="GO" id="GO:0071555">
    <property type="term" value="P:cell wall organization"/>
    <property type="evidence" value="ECO:0007669"/>
    <property type="project" value="UniProtKB-KW"/>
</dbReference>
<dbReference type="GO" id="GO:0009252">
    <property type="term" value="P:peptidoglycan biosynthetic process"/>
    <property type="evidence" value="ECO:0007669"/>
    <property type="project" value="UniProtKB-KW"/>
</dbReference>
<dbReference type="GO" id="GO:0008360">
    <property type="term" value="P:regulation of cell shape"/>
    <property type="evidence" value="ECO:0007669"/>
    <property type="project" value="UniProtKB-KW"/>
</dbReference>
<dbReference type="GO" id="GO:0046677">
    <property type="term" value="P:response to antibiotic"/>
    <property type="evidence" value="ECO:0007669"/>
    <property type="project" value="UniProtKB-UniRule"/>
</dbReference>
<dbReference type="HAMAP" id="MF_01006">
    <property type="entry name" value="Undec_diphosphatase"/>
    <property type="match status" value="1"/>
</dbReference>
<dbReference type="InterPro" id="IPR003824">
    <property type="entry name" value="UppP"/>
</dbReference>
<dbReference type="NCBIfam" id="TIGR00753">
    <property type="entry name" value="undec_PP_bacA"/>
    <property type="match status" value="1"/>
</dbReference>
<dbReference type="PANTHER" id="PTHR30622">
    <property type="entry name" value="UNDECAPRENYL-DIPHOSPHATASE"/>
    <property type="match status" value="1"/>
</dbReference>
<dbReference type="PANTHER" id="PTHR30622:SF4">
    <property type="entry name" value="UNDECAPRENYL-DIPHOSPHATASE"/>
    <property type="match status" value="1"/>
</dbReference>
<dbReference type="Pfam" id="PF02673">
    <property type="entry name" value="BacA"/>
    <property type="match status" value="1"/>
</dbReference>
<organism>
    <name type="scientific">Bifidobacterium longum (strain DJO10A)</name>
    <dbReference type="NCBI Taxonomy" id="205913"/>
    <lineage>
        <taxon>Bacteria</taxon>
        <taxon>Bacillati</taxon>
        <taxon>Actinomycetota</taxon>
        <taxon>Actinomycetes</taxon>
        <taxon>Bifidobacteriales</taxon>
        <taxon>Bifidobacteriaceae</taxon>
        <taxon>Bifidobacterium</taxon>
    </lineage>
</organism>
<name>UPPP_BIFLD</name>
<comment type="function">
    <text evidence="1">Catalyzes the dephosphorylation of undecaprenyl diphosphate (UPP). Confers resistance to bacitracin.</text>
</comment>
<comment type="catalytic activity">
    <reaction evidence="1">
        <text>di-trans,octa-cis-undecaprenyl diphosphate + H2O = di-trans,octa-cis-undecaprenyl phosphate + phosphate + H(+)</text>
        <dbReference type="Rhea" id="RHEA:28094"/>
        <dbReference type="ChEBI" id="CHEBI:15377"/>
        <dbReference type="ChEBI" id="CHEBI:15378"/>
        <dbReference type="ChEBI" id="CHEBI:43474"/>
        <dbReference type="ChEBI" id="CHEBI:58405"/>
        <dbReference type="ChEBI" id="CHEBI:60392"/>
        <dbReference type="EC" id="3.6.1.27"/>
    </reaction>
</comment>
<comment type="subcellular location">
    <subcellularLocation>
        <location evidence="1">Cell membrane</location>
        <topology evidence="1">Multi-pass membrane protein</topology>
    </subcellularLocation>
</comment>
<comment type="miscellaneous">
    <text>Bacitracin is thought to be involved in the inhibition of peptidoglycan synthesis by sequestering undecaprenyl diphosphate, thereby reducing the pool of lipid carrier available.</text>
</comment>
<comment type="similarity">
    <text evidence="1">Belongs to the UppP family.</text>
</comment>
<feature type="chain" id="PRO_1000197348" description="Undecaprenyl-diphosphatase">
    <location>
        <begin position="1"/>
        <end position="294"/>
    </location>
</feature>
<feature type="transmembrane region" description="Helical" evidence="1">
    <location>
        <begin position="39"/>
        <end position="59"/>
    </location>
</feature>
<feature type="transmembrane region" description="Helical" evidence="1">
    <location>
        <begin position="93"/>
        <end position="113"/>
    </location>
</feature>
<feature type="transmembrane region" description="Helical" evidence="1">
    <location>
        <begin position="123"/>
        <end position="143"/>
    </location>
</feature>
<feature type="transmembrane region" description="Helical" evidence="1">
    <location>
        <begin position="198"/>
        <end position="218"/>
    </location>
</feature>
<feature type="transmembrane region" description="Helical" evidence="1">
    <location>
        <begin position="232"/>
        <end position="252"/>
    </location>
</feature>
<feature type="transmembrane region" description="Helical" evidence="1">
    <location>
        <begin position="268"/>
        <end position="288"/>
    </location>
</feature>
<evidence type="ECO:0000255" key="1">
    <source>
        <dbReference type="HAMAP-Rule" id="MF_01006"/>
    </source>
</evidence>
<accession>B3DRX3</accession>
<proteinExistence type="inferred from homology"/>
<protein>
    <recommendedName>
        <fullName evidence="1">Undecaprenyl-diphosphatase</fullName>
        <ecNumber evidence="1">3.6.1.27</ecNumber>
    </recommendedName>
    <alternativeName>
        <fullName evidence="1">Bacitracin resistance protein</fullName>
    </alternativeName>
    <alternativeName>
        <fullName evidence="1">Undecaprenyl pyrophosphate phosphatase</fullName>
    </alternativeName>
</protein>
<sequence length="294" mass="31977">MNFFQAIILGIVQALTEYLPVSSSAHIRIFGDLMLGSDPGAAFTAIIQIGTELAVILYFRHDIINILTHWFSCLFGKNGKDWKARMGRGDNYATLGWNIIVGSIPIIILGFTLQNVIETSLRNLWITVTVLLVFGILLWMVDAKARQNKTMNDMTYRDAFLFGLGQSMALIPGVSRSGGTITVGRALGYTREAAVRLSFLMAIPAVFGSGLLEAIKAVKNYKTDAMFPGWGPTLVAMVISFVLGYIVIIGFLKFVSNFSYKAFAIYRIGLAVVVALLLIVGVLPAIDPSVVAAA</sequence>
<keyword id="KW-0046">Antibiotic resistance</keyword>
<keyword id="KW-1003">Cell membrane</keyword>
<keyword id="KW-0133">Cell shape</keyword>
<keyword id="KW-0961">Cell wall biogenesis/degradation</keyword>
<keyword id="KW-0378">Hydrolase</keyword>
<keyword id="KW-0472">Membrane</keyword>
<keyword id="KW-0573">Peptidoglycan synthesis</keyword>
<keyword id="KW-0812">Transmembrane</keyword>
<keyword id="KW-1133">Transmembrane helix</keyword>
<reference key="1">
    <citation type="journal article" date="2008" name="BMC Genomics">
        <title>Comparative genomic analysis of the gut bacterium Bifidobacterium longum reveals loci susceptible to deletion during pure culture growth.</title>
        <authorList>
            <person name="Lee J.H."/>
            <person name="Karamychev V.N."/>
            <person name="Kozyavkin S.A."/>
            <person name="Mills D."/>
            <person name="Pavlov A.R."/>
            <person name="Pavlova N.V."/>
            <person name="Polouchine N.N."/>
            <person name="Richardson P.M."/>
            <person name="Shakhova V.V."/>
            <person name="Slesarev A.I."/>
            <person name="Weimer B."/>
            <person name="O'Sullivan D.J."/>
        </authorList>
    </citation>
    <scope>NUCLEOTIDE SEQUENCE [LARGE SCALE GENOMIC DNA]</scope>
    <source>
        <strain>DJO10A</strain>
    </source>
</reference>